<proteinExistence type="inferred from homology"/>
<comment type="function">
    <text evidence="1">Part of a stress-induced multi-chaperone system, it is involved in the recovery of the cell from heat-induced damage, in cooperation with DnaK, DnaJ and GrpE. Acts before DnaK, in the processing of protein aggregates. Protein binding stimulates the ATPase activity; ATP hydrolysis unfolds the denatured protein aggregates, which probably helps expose new hydrophobic binding sites on the surface of ClpB-bound aggregates, contributing to the solubilization and refolding of denatured protein aggregates by DnaK (By similarity).</text>
</comment>
<comment type="subunit">
    <text evidence="1">Homohexamer. The oligomerization is ATP-dependent (By similarity).</text>
</comment>
<comment type="subcellular location">
    <subcellularLocation>
        <location evidence="3">Cytoplasm</location>
    </subcellularLocation>
</comment>
<comment type="domain">
    <text evidence="1">The Clp repeat (R) domain probably functions as a substrate-discriminating domain, recruiting aggregated proteins to the ClpB hexamer and/or stabilizing bound proteins. The NBD2 domain is responsible for oligomerization, whereas the NBD1 domain stabilizes the hexamer probably in an ATP-dependent manner. The movement of the coiled-coil domain is essential for ClpB ability to rescue proteins from an aggregated state, probably by pulling apart large aggregated proteins, which are bound between the coiled-coils motifs of adjacent ClpB subunits in the functional hexamer (By similarity).</text>
</comment>
<comment type="similarity">
    <text evidence="3">Belongs to the ClpA/ClpB family.</text>
</comment>
<sequence>MQPNNPNQFTEKAWDAIVRTTEVAKEYRQQQLESEHLFKALLDQDGGLAGSIFTKAGVNLTKLGERVEQFINRQPKLTNPGQSVYLGRSLDALLDRAEGFRKEYGDDFISIEHLVLAFAKDVRFGQQILREFSLDEAKLKAVVAQVRGNQKVTSQNPESTYESLDKYGRDLTQLAREGKLDPVIGRDEEIRRTIQILSRRTKNNPVLIGEPGVGKTAIAEGLAQRIVSGDVPESLQGRKLIALDMGALIAGSKYRGEFEERLKAVLNEVTKSEGQIVLFIDEIHTVVGAGATQGAMDAGNLLKPMLARGELRCIGATTLDEYRKYIEKDAALERRFQQVYVDQPTVEDTISILRGLKERYEVHHGVRISDSALVAAAVLSHRYISDRFLPDKAIDLMDEAAAKLKMEITSKPEALDEVDRKILQLEMERLSLAKESDAASRDRLERLEKELADLKEEQRSLNAQWQAEKDIIDQVQAVKEEIDQVNVQIQQAERDYDLNRAAELKYGKLSELQKRLDAADKQLSETQTSGRSLLREEVTEEDIAEIISKWTGIPVSKLVASEREKLLHLEDELHKRVVGQEEAVRIVSEAIQRSRAGLADPNRPIASFIFLGPTGVGKTELAKALASFLFDDENAMVRIDMSEYMEKHSVSRLIGAPPGYVGYDEGGQLTEAVRRRPYAVVLFDEIEKAHNDVFNVLLQVLDDGRITDSQGRTIDFKNAVIIMTSNIGSDAILRLGGNDAYYEQMREEVMRAMQVHFRPEFLNRVDDIIIFRNLRRDQLAAIVKLQIARLEKRLADRKITLKLSEAAIDYIVEAGYDPVYGARPLKRAIQNELVNPLARGLLKGDFNDGDTIFVDIENERPVFRRLSAMPVV</sequence>
<dbReference type="EMBL" id="BA000045">
    <property type="protein sequence ID" value="BAC91518.1"/>
    <property type="molecule type" value="Genomic_DNA"/>
</dbReference>
<dbReference type="RefSeq" id="NP_926523.1">
    <property type="nucleotide sequence ID" value="NC_005125.1"/>
</dbReference>
<dbReference type="RefSeq" id="WP_011143566.1">
    <property type="nucleotide sequence ID" value="NC_005125.1"/>
</dbReference>
<dbReference type="SMR" id="Q7NFE9"/>
<dbReference type="FunCoup" id="Q7NFE9">
    <property type="interactions" value="214"/>
</dbReference>
<dbReference type="STRING" id="251221.gene:10761092"/>
<dbReference type="EnsemblBacteria" id="BAC91518">
    <property type="protein sequence ID" value="BAC91518"/>
    <property type="gene ID" value="BAC91518"/>
</dbReference>
<dbReference type="KEGG" id="gvi:gll3577"/>
<dbReference type="PATRIC" id="fig|251221.4.peg.3610"/>
<dbReference type="eggNOG" id="COG0542">
    <property type="taxonomic scope" value="Bacteria"/>
</dbReference>
<dbReference type="HOGENOM" id="CLU_005070_4_0_3"/>
<dbReference type="InParanoid" id="Q7NFE9"/>
<dbReference type="OrthoDB" id="438311at2"/>
<dbReference type="PhylomeDB" id="Q7NFE9"/>
<dbReference type="Proteomes" id="UP000000557">
    <property type="component" value="Chromosome"/>
</dbReference>
<dbReference type="GO" id="GO:0005737">
    <property type="term" value="C:cytoplasm"/>
    <property type="evidence" value="ECO:0000318"/>
    <property type="project" value="GO_Central"/>
</dbReference>
<dbReference type="GO" id="GO:0005524">
    <property type="term" value="F:ATP binding"/>
    <property type="evidence" value="ECO:0007669"/>
    <property type="project" value="UniProtKB-KW"/>
</dbReference>
<dbReference type="GO" id="GO:0016887">
    <property type="term" value="F:ATP hydrolysis activity"/>
    <property type="evidence" value="ECO:0000318"/>
    <property type="project" value="GO_Central"/>
</dbReference>
<dbReference type="GO" id="GO:0034605">
    <property type="term" value="P:cellular response to heat"/>
    <property type="evidence" value="ECO:0000318"/>
    <property type="project" value="GO_Central"/>
</dbReference>
<dbReference type="GO" id="GO:0042026">
    <property type="term" value="P:protein refolding"/>
    <property type="evidence" value="ECO:0007669"/>
    <property type="project" value="InterPro"/>
</dbReference>
<dbReference type="CDD" id="cd00009">
    <property type="entry name" value="AAA"/>
    <property type="match status" value="1"/>
</dbReference>
<dbReference type="CDD" id="cd19499">
    <property type="entry name" value="RecA-like_ClpB_Hsp104-like"/>
    <property type="match status" value="1"/>
</dbReference>
<dbReference type="FunFam" id="1.10.8.60:FF:000017">
    <property type="entry name" value="ATP-dependent chaperone ClpB"/>
    <property type="match status" value="1"/>
</dbReference>
<dbReference type="FunFam" id="3.40.50.300:FF:000120">
    <property type="entry name" value="ATP-dependent chaperone ClpB"/>
    <property type="match status" value="1"/>
</dbReference>
<dbReference type="FunFam" id="3.40.50.300:FF:000025">
    <property type="entry name" value="ATP-dependent Clp protease subunit"/>
    <property type="match status" value="1"/>
</dbReference>
<dbReference type="FunFam" id="3.40.50.300:FF:000010">
    <property type="entry name" value="Chaperone clpB 1, putative"/>
    <property type="match status" value="1"/>
</dbReference>
<dbReference type="Gene3D" id="1.10.8.60">
    <property type="match status" value="1"/>
</dbReference>
<dbReference type="Gene3D" id="1.10.1780.10">
    <property type="entry name" value="Clp, N-terminal domain"/>
    <property type="match status" value="1"/>
</dbReference>
<dbReference type="Gene3D" id="3.40.50.300">
    <property type="entry name" value="P-loop containing nucleotide triphosphate hydrolases"/>
    <property type="match status" value="3"/>
</dbReference>
<dbReference type="InterPro" id="IPR003593">
    <property type="entry name" value="AAA+_ATPase"/>
</dbReference>
<dbReference type="InterPro" id="IPR003959">
    <property type="entry name" value="ATPase_AAA_core"/>
</dbReference>
<dbReference type="InterPro" id="IPR017730">
    <property type="entry name" value="Chaperonin_ClpB"/>
</dbReference>
<dbReference type="InterPro" id="IPR019489">
    <property type="entry name" value="Clp_ATPase_C"/>
</dbReference>
<dbReference type="InterPro" id="IPR036628">
    <property type="entry name" value="Clp_N_dom_sf"/>
</dbReference>
<dbReference type="InterPro" id="IPR004176">
    <property type="entry name" value="Clp_R_dom"/>
</dbReference>
<dbReference type="InterPro" id="IPR001270">
    <property type="entry name" value="ClpA/B"/>
</dbReference>
<dbReference type="InterPro" id="IPR018368">
    <property type="entry name" value="ClpA/B_CS1"/>
</dbReference>
<dbReference type="InterPro" id="IPR028299">
    <property type="entry name" value="ClpA/B_CS2"/>
</dbReference>
<dbReference type="InterPro" id="IPR041546">
    <property type="entry name" value="ClpA/ClpB_AAA_lid"/>
</dbReference>
<dbReference type="InterPro" id="IPR050130">
    <property type="entry name" value="ClpA_ClpB"/>
</dbReference>
<dbReference type="InterPro" id="IPR027417">
    <property type="entry name" value="P-loop_NTPase"/>
</dbReference>
<dbReference type="NCBIfam" id="TIGR03346">
    <property type="entry name" value="chaperone_ClpB"/>
    <property type="match status" value="1"/>
</dbReference>
<dbReference type="PANTHER" id="PTHR11638">
    <property type="entry name" value="ATP-DEPENDENT CLP PROTEASE"/>
    <property type="match status" value="1"/>
</dbReference>
<dbReference type="PANTHER" id="PTHR11638:SF18">
    <property type="entry name" value="HEAT SHOCK PROTEIN 104"/>
    <property type="match status" value="1"/>
</dbReference>
<dbReference type="Pfam" id="PF00004">
    <property type="entry name" value="AAA"/>
    <property type="match status" value="1"/>
</dbReference>
<dbReference type="Pfam" id="PF07724">
    <property type="entry name" value="AAA_2"/>
    <property type="match status" value="1"/>
</dbReference>
<dbReference type="Pfam" id="PF17871">
    <property type="entry name" value="AAA_lid_9"/>
    <property type="match status" value="1"/>
</dbReference>
<dbReference type="Pfam" id="PF02861">
    <property type="entry name" value="Clp_N"/>
    <property type="match status" value="2"/>
</dbReference>
<dbReference type="Pfam" id="PF10431">
    <property type="entry name" value="ClpB_D2-small"/>
    <property type="match status" value="1"/>
</dbReference>
<dbReference type="PRINTS" id="PR00300">
    <property type="entry name" value="CLPPROTEASEA"/>
</dbReference>
<dbReference type="SMART" id="SM00382">
    <property type="entry name" value="AAA"/>
    <property type="match status" value="2"/>
</dbReference>
<dbReference type="SMART" id="SM01086">
    <property type="entry name" value="ClpB_D2-small"/>
    <property type="match status" value="1"/>
</dbReference>
<dbReference type="SUPFAM" id="SSF81923">
    <property type="entry name" value="Double Clp-N motif"/>
    <property type="match status" value="1"/>
</dbReference>
<dbReference type="SUPFAM" id="SSF52540">
    <property type="entry name" value="P-loop containing nucleoside triphosphate hydrolases"/>
    <property type="match status" value="2"/>
</dbReference>
<dbReference type="PROSITE" id="PS51903">
    <property type="entry name" value="CLP_R"/>
    <property type="match status" value="1"/>
</dbReference>
<dbReference type="PROSITE" id="PS00870">
    <property type="entry name" value="CLPAB_1"/>
    <property type="match status" value="1"/>
</dbReference>
<dbReference type="PROSITE" id="PS00871">
    <property type="entry name" value="CLPAB_2"/>
    <property type="match status" value="1"/>
</dbReference>
<feature type="chain" id="PRO_0000191125" description="Chaperone protein ClpB">
    <location>
        <begin position="1"/>
        <end position="872"/>
    </location>
</feature>
<feature type="domain" description="Clp R" evidence="2">
    <location>
        <begin position="6"/>
        <end position="149"/>
    </location>
</feature>
<feature type="region of interest" description="Repeat 1" evidence="2">
    <location>
        <begin position="9"/>
        <end position="74"/>
    </location>
</feature>
<feature type="region of interest" description="Repeat 2" evidence="2">
    <location>
        <begin position="86"/>
        <end position="149"/>
    </location>
</feature>
<feature type="region of interest" description="NBD1" evidence="1">
    <location>
        <begin position="162"/>
        <end position="343"/>
    </location>
</feature>
<feature type="region of interest" description="Linker" evidence="1">
    <location>
        <begin position="344"/>
        <end position="552"/>
    </location>
</feature>
<feature type="region of interest" description="NBD2" evidence="1">
    <location>
        <begin position="562"/>
        <end position="773"/>
    </location>
</feature>
<feature type="region of interest" description="C-terminal" evidence="1">
    <location>
        <begin position="774"/>
        <end position="872"/>
    </location>
</feature>
<feature type="coiled-coil region" evidence="1">
    <location>
        <begin position="394"/>
        <end position="528"/>
    </location>
</feature>
<feature type="binding site" evidence="1">
    <location>
        <begin position="209"/>
        <end position="216"/>
    </location>
    <ligand>
        <name>ATP</name>
        <dbReference type="ChEBI" id="CHEBI:30616"/>
        <label>1</label>
    </ligand>
</feature>
<feature type="binding site" evidence="1">
    <location>
        <begin position="612"/>
        <end position="619"/>
    </location>
    <ligand>
        <name>ATP</name>
        <dbReference type="ChEBI" id="CHEBI:30616"/>
        <label>2</label>
    </ligand>
</feature>
<name>CLPB_GLOVI</name>
<gene>
    <name type="primary">clpB</name>
    <name type="ordered locus">gll3577</name>
</gene>
<protein>
    <recommendedName>
        <fullName>Chaperone protein ClpB</fullName>
    </recommendedName>
</protein>
<organism>
    <name type="scientific">Gloeobacter violaceus (strain ATCC 29082 / PCC 7421)</name>
    <dbReference type="NCBI Taxonomy" id="251221"/>
    <lineage>
        <taxon>Bacteria</taxon>
        <taxon>Bacillati</taxon>
        <taxon>Cyanobacteriota</taxon>
        <taxon>Cyanophyceae</taxon>
        <taxon>Gloeobacterales</taxon>
        <taxon>Gloeobacteraceae</taxon>
        <taxon>Gloeobacter</taxon>
    </lineage>
</organism>
<accession>Q7NFE9</accession>
<evidence type="ECO:0000250" key="1"/>
<evidence type="ECO:0000255" key="2">
    <source>
        <dbReference type="PROSITE-ProRule" id="PRU01251"/>
    </source>
</evidence>
<evidence type="ECO:0000305" key="3"/>
<reference key="1">
    <citation type="journal article" date="2003" name="DNA Res.">
        <title>Complete genome structure of Gloeobacter violaceus PCC 7421, a cyanobacterium that lacks thylakoids.</title>
        <authorList>
            <person name="Nakamura Y."/>
            <person name="Kaneko T."/>
            <person name="Sato S."/>
            <person name="Mimuro M."/>
            <person name="Miyashita H."/>
            <person name="Tsuchiya T."/>
            <person name="Sasamoto S."/>
            <person name="Watanabe A."/>
            <person name="Kawashima K."/>
            <person name="Kishida Y."/>
            <person name="Kiyokawa C."/>
            <person name="Kohara M."/>
            <person name="Matsumoto M."/>
            <person name="Matsuno A."/>
            <person name="Nakazaki N."/>
            <person name="Shimpo S."/>
            <person name="Takeuchi C."/>
            <person name="Yamada M."/>
            <person name="Tabata S."/>
        </authorList>
    </citation>
    <scope>NUCLEOTIDE SEQUENCE [LARGE SCALE GENOMIC DNA]</scope>
    <source>
        <strain>ATCC 29082 / PCC 7421</strain>
    </source>
</reference>
<keyword id="KW-0067">ATP-binding</keyword>
<keyword id="KW-0143">Chaperone</keyword>
<keyword id="KW-0175">Coiled coil</keyword>
<keyword id="KW-0963">Cytoplasm</keyword>
<keyword id="KW-0547">Nucleotide-binding</keyword>
<keyword id="KW-1185">Reference proteome</keyword>
<keyword id="KW-0677">Repeat</keyword>
<keyword id="KW-0346">Stress response</keyword>